<protein>
    <recommendedName>
        <fullName evidence="1">DNA-directed RNA polymerase subunit beta'</fullName>
        <shortName evidence="1">RNAP subunit beta'</shortName>
        <ecNumber evidence="1">2.7.7.6</ecNumber>
    </recommendedName>
    <alternativeName>
        <fullName evidence="1">RNA polymerase subunit beta'</fullName>
    </alternativeName>
    <alternativeName>
        <fullName evidence="1">Transcriptase subunit beta'</fullName>
    </alternativeName>
</protein>
<gene>
    <name evidence="1" type="primary">rpoC</name>
    <name type="ordered locus">Rru_A2694</name>
</gene>
<sequence>MNELMKIFGQVSGTQAFDQIKISIASPEKIRSWSFGEIKKPETINYRTFKPERDGLFCARIFGPIKDYECLCGKYKRMKYRGIICEKCGVEVTLSKVRRERMGHIELAAPVAHIWFMKSLPSRVGLLIDMTLKDLERVLYFENYVVVEPGLTPLKLHEMLSEEQYQRAVEEYGEDSFTAGIGAEAIRDMLMSIDLETLKTDMKVELRDTTSEAKRKKLVKRLKIVDAFIESGCRPEWMILEVIPVIPPELRPLVPLDGGRFATSDLNDLYRRVINRNNRLKRLIELRAPDIIIRNEKRMLQESVDALFDNGRRGRAITGANKRPLKSLSDMLKGKQGRFRQNLLGKRVDYSGRSVIVVGPELKLHQCGLPKKMALELFKPFVYSKLEQYHYATTIKAAKRMVEKERPEVWDILEEVIREHPVMLNRAPTLHRLGIQAFEPVLIEGKAIQLHPLVCTAFNADFDGDQMAVHVPLSLEAQLEARVLMMSTNNILSPANGKPIIVPTQDIVLGLYYLTLDREGEKGEGMAFASLNEIEHALQARVVSLQARVKARLHTIDENGAPVIRTVETTPGRMLLSRLLPRHTALPFSVINRLLRKKDITDVIDTVYRHCGQKETVIFCDRVMQLGYAHAARAGISFGKDDLVIPPTKAQLVADTDAEVKEFEQQYQDGLITQGEKYNKVVDAWSHCTERVADEMMKEIAKIEPGKPVNSVYMMAHSGARGSAAQMKQLAGMRGLMAKPSGEIIETPIVSNFKEGLTVLEYFNSTHGARKGLADTALKTANSGYLTRRLVDVAQDAIIVIEDCGTSRGITAMPVVEGGQIIASLGERVLGRTAAEDIKDTDGTIIVPLGKMIEEHDVELLEEAGIEQVRIRSVLTCEAETGICGKCYGRDLARGTKVNIGEAVGVIAAQSIGEPGTQLTMRTFHIGGAAQRGAEQSSVEAAFDGKIVMENRAVVGTSENVLIVMSRNCEVKITDEAGREKARYRIPYGSKLLTDEGRMVTKGDRLAEWDPYTVPIITEREGIAIYNDLVEGVSVREVTDEATGISSKVVVEWKNMPKGTDLKPRITLRDDRGEGITLANGLEARYFMSVDTILSVENGQRVKAGDVLGRIPREGSKTRDITGGLPRVAELFEARKPKDHAIISEIDGRVEFGKDYKSKRRLLVVPEDGDPVEYLLPKGKHLTIQEGDYVRKGDPLMDGNPVPHDILRVMGVEALANYLIKEIQDVYRLQGVKINDKHIEVISRQMLQKVEITEPGDTTFLVGELIDRTDFQIENEKTLKENGRPANSIPVLQGITKASLQTHSFISAASFQETTRVLTEAAVSGKSDSLMGLKENVIVGRLIPAGTGAMMNRLRALAATRDKEIEDSRGAEMVPVLGAAESFTPRLPEPPAE</sequence>
<accession>Q2RQV4</accession>
<reference key="1">
    <citation type="journal article" date="2011" name="Stand. Genomic Sci.">
        <title>Complete genome sequence of Rhodospirillum rubrum type strain (S1).</title>
        <authorList>
            <person name="Munk A.C."/>
            <person name="Copeland A."/>
            <person name="Lucas S."/>
            <person name="Lapidus A."/>
            <person name="Del Rio T.G."/>
            <person name="Barry K."/>
            <person name="Detter J.C."/>
            <person name="Hammon N."/>
            <person name="Israni S."/>
            <person name="Pitluck S."/>
            <person name="Brettin T."/>
            <person name="Bruce D."/>
            <person name="Han C."/>
            <person name="Tapia R."/>
            <person name="Gilna P."/>
            <person name="Schmutz J."/>
            <person name="Larimer F."/>
            <person name="Land M."/>
            <person name="Kyrpides N.C."/>
            <person name="Mavromatis K."/>
            <person name="Richardson P."/>
            <person name="Rohde M."/>
            <person name="Goeker M."/>
            <person name="Klenk H.P."/>
            <person name="Zhang Y."/>
            <person name="Roberts G.P."/>
            <person name="Reslewic S."/>
            <person name="Schwartz D.C."/>
        </authorList>
    </citation>
    <scope>NUCLEOTIDE SEQUENCE [LARGE SCALE GENOMIC DNA]</scope>
    <source>
        <strain>ATCC 11170 / ATH 1.1.1 / DSM 467 / LMG 4362 / NCIMB 8255 / S1</strain>
    </source>
</reference>
<proteinExistence type="inferred from homology"/>
<comment type="function">
    <text evidence="1">DNA-dependent RNA polymerase catalyzes the transcription of DNA into RNA using the four ribonucleoside triphosphates as substrates.</text>
</comment>
<comment type="catalytic activity">
    <reaction evidence="1">
        <text>RNA(n) + a ribonucleoside 5'-triphosphate = RNA(n+1) + diphosphate</text>
        <dbReference type="Rhea" id="RHEA:21248"/>
        <dbReference type="Rhea" id="RHEA-COMP:14527"/>
        <dbReference type="Rhea" id="RHEA-COMP:17342"/>
        <dbReference type="ChEBI" id="CHEBI:33019"/>
        <dbReference type="ChEBI" id="CHEBI:61557"/>
        <dbReference type="ChEBI" id="CHEBI:140395"/>
        <dbReference type="EC" id="2.7.7.6"/>
    </reaction>
</comment>
<comment type="cofactor">
    <cofactor evidence="1">
        <name>Mg(2+)</name>
        <dbReference type="ChEBI" id="CHEBI:18420"/>
    </cofactor>
    <text evidence="1">Binds 1 Mg(2+) ion per subunit.</text>
</comment>
<comment type="cofactor">
    <cofactor evidence="1">
        <name>Zn(2+)</name>
        <dbReference type="ChEBI" id="CHEBI:29105"/>
    </cofactor>
    <text evidence="1">Binds 2 Zn(2+) ions per subunit.</text>
</comment>
<comment type="subunit">
    <text evidence="1">The RNAP catalytic core consists of 2 alpha, 1 beta, 1 beta' and 1 omega subunit. When a sigma factor is associated with the core the holoenzyme is formed, which can initiate transcription.</text>
</comment>
<comment type="similarity">
    <text evidence="1">Belongs to the RNA polymerase beta' chain family.</text>
</comment>
<organism>
    <name type="scientific">Rhodospirillum rubrum (strain ATCC 11170 / ATH 1.1.1 / DSM 467 / LMG 4362 / NCIMB 8255 / S1)</name>
    <dbReference type="NCBI Taxonomy" id="269796"/>
    <lineage>
        <taxon>Bacteria</taxon>
        <taxon>Pseudomonadati</taxon>
        <taxon>Pseudomonadota</taxon>
        <taxon>Alphaproteobacteria</taxon>
        <taxon>Rhodospirillales</taxon>
        <taxon>Rhodospirillaceae</taxon>
        <taxon>Rhodospirillum</taxon>
    </lineage>
</organism>
<keyword id="KW-0240">DNA-directed RNA polymerase</keyword>
<keyword id="KW-0460">Magnesium</keyword>
<keyword id="KW-0479">Metal-binding</keyword>
<keyword id="KW-0548">Nucleotidyltransferase</keyword>
<keyword id="KW-1185">Reference proteome</keyword>
<keyword id="KW-0804">Transcription</keyword>
<keyword id="KW-0808">Transferase</keyword>
<keyword id="KW-0862">Zinc</keyword>
<dbReference type="EC" id="2.7.7.6" evidence="1"/>
<dbReference type="EMBL" id="CP000230">
    <property type="protein sequence ID" value="ABC23491.1"/>
    <property type="molecule type" value="Genomic_DNA"/>
</dbReference>
<dbReference type="RefSeq" id="WP_011390504.1">
    <property type="nucleotide sequence ID" value="NC_007643.1"/>
</dbReference>
<dbReference type="RefSeq" id="YP_427778.1">
    <property type="nucleotide sequence ID" value="NC_007643.1"/>
</dbReference>
<dbReference type="SMR" id="Q2RQV4"/>
<dbReference type="STRING" id="269796.Rru_A2694"/>
<dbReference type="EnsemblBacteria" id="ABC23491">
    <property type="protein sequence ID" value="ABC23491"/>
    <property type="gene ID" value="Rru_A2694"/>
</dbReference>
<dbReference type="KEGG" id="rru:Rru_A2694"/>
<dbReference type="PATRIC" id="fig|269796.9.peg.2802"/>
<dbReference type="eggNOG" id="COG0086">
    <property type="taxonomic scope" value="Bacteria"/>
</dbReference>
<dbReference type="HOGENOM" id="CLU_000524_3_1_5"/>
<dbReference type="PhylomeDB" id="Q2RQV4"/>
<dbReference type="Proteomes" id="UP000001929">
    <property type="component" value="Chromosome"/>
</dbReference>
<dbReference type="GO" id="GO:0000428">
    <property type="term" value="C:DNA-directed RNA polymerase complex"/>
    <property type="evidence" value="ECO:0007669"/>
    <property type="project" value="UniProtKB-KW"/>
</dbReference>
<dbReference type="GO" id="GO:0003677">
    <property type="term" value="F:DNA binding"/>
    <property type="evidence" value="ECO:0007669"/>
    <property type="project" value="UniProtKB-UniRule"/>
</dbReference>
<dbReference type="GO" id="GO:0003899">
    <property type="term" value="F:DNA-directed RNA polymerase activity"/>
    <property type="evidence" value="ECO:0007669"/>
    <property type="project" value="UniProtKB-UniRule"/>
</dbReference>
<dbReference type="GO" id="GO:0000287">
    <property type="term" value="F:magnesium ion binding"/>
    <property type="evidence" value="ECO:0007669"/>
    <property type="project" value="UniProtKB-UniRule"/>
</dbReference>
<dbReference type="GO" id="GO:0008270">
    <property type="term" value="F:zinc ion binding"/>
    <property type="evidence" value="ECO:0007669"/>
    <property type="project" value="UniProtKB-UniRule"/>
</dbReference>
<dbReference type="GO" id="GO:0006351">
    <property type="term" value="P:DNA-templated transcription"/>
    <property type="evidence" value="ECO:0007669"/>
    <property type="project" value="UniProtKB-UniRule"/>
</dbReference>
<dbReference type="CDD" id="cd02655">
    <property type="entry name" value="RNAP_beta'_C"/>
    <property type="match status" value="1"/>
</dbReference>
<dbReference type="CDD" id="cd01609">
    <property type="entry name" value="RNAP_beta'_N"/>
    <property type="match status" value="1"/>
</dbReference>
<dbReference type="FunFam" id="1.10.40.90:FF:000001">
    <property type="entry name" value="DNA-directed RNA polymerase subunit beta"/>
    <property type="match status" value="1"/>
</dbReference>
<dbReference type="FunFam" id="4.10.860.120:FF:000001">
    <property type="entry name" value="DNA-directed RNA polymerase subunit beta"/>
    <property type="match status" value="1"/>
</dbReference>
<dbReference type="Gene3D" id="1.10.132.30">
    <property type="match status" value="1"/>
</dbReference>
<dbReference type="Gene3D" id="1.10.150.390">
    <property type="match status" value="1"/>
</dbReference>
<dbReference type="Gene3D" id="1.10.1790.20">
    <property type="match status" value="1"/>
</dbReference>
<dbReference type="Gene3D" id="1.10.40.90">
    <property type="match status" value="1"/>
</dbReference>
<dbReference type="Gene3D" id="2.40.40.20">
    <property type="match status" value="1"/>
</dbReference>
<dbReference type="Gene3D" id="2.40.50.100">
    <property type="match status" value="3"/>
</dbReference>
<dbReference type="Gene3D" id="4.10.860.120">
    <property type="entry name" value="RNA polymerase II, clamp domain"/>
    <property type="match status" value="1"/>
</dbReference>
<dbReference type="Gene3D" id="1.10.274.100">
    <property type="entry name" value="RNA polymerase Rpb1, domain 3"/>
    <property type="match status" value="1"/>
</dbReference>
<dbReference type="HAMAP" id="MF_01322">
    <property type="entry name" value="RNApol_bact_RpoC"/>
    <property type="match status" value="1"/>
</dbReference>
<dbReference type="InterPro" id="IPR045867">
    <property type="entry name" value="DNA-dir_RpoC_beta_prime"/>
</dbReference>
<dbReference type="InterPro" id="IPR012754">
    <property type="entry name" value="DNA-dir_RpoC_beta_prime_bact"/>
</dbReference>
<dbReference type="InterPro" id="IPR000722">
    <property type="entry name" value="RNA_pol_asu"/>
</dbReference>
<dbReference type="InterPro" id="IPR006592">
    <property type="entry name" value="RNA_pol_N"/>
</dbReference>
<dbReference type="InterPro" id="IPR007080">
    <property type="entry name" value="RNA_pol_Rpb1_1"/>
</dbReference>
<dbReference type="InterPro" id="IPR007066">
    <property type="entry name" value="RNA_pol_Rpb1_3"/>
</dbReference>
<dbReference type="InterPro" id="IPR042102">
    <property type="entry name" value="RNA_pol_Rpb1_3_sf"/>
</dbReference>
<dbReference type="InterPro" id="IPR007083">
    <property type="entry name" value="RNA_pol_Rpb1_4"/>
</dbReference>
<dbReference type="InterPro" id="IPR007081">
    <property type="entry name" value="RNA_pol_Rpb1_5"/>
</dbReference>
<dbReference type="InterPro" id="IPR044893">
    <property type="entry name" value="RNA_pol_Rpb1_clamp_domain"/>
</dbReference>
<dbReference type="InterPro" id="IPR038120">
    <property type="entry name" value="Rpb1_funnel_sf"/>
</dbReference>
<dbReference type="NCBIfam" id="TIGR02386">
    <property type="entry name" value="rpoC_TIGR"/>
    <property type="match status" value="1"/>
</dbReference>
<dbReference type="PANTHER" id="PTHR19376">
    <property type="entry name" value="DNA-DIRECTED RNA POLYMERASE"/>
    <property type="match status" value="1"/>
</dbReference>
<dbReference type="PANTHER" id="PTHR19376:SF54">
    <property type="entry name" value="DNA-DIRECTED RNA POLYMERASE SUBUNIT BETA"/>
    <property type="match status" value="1"/>
</dbReference>
<dbReference type="Pfam" id="PF04997">
    <property type="entry name" value="RNA_pol_Rpb1_1"/>
    <property type="match status" value="1"/>
</dbReference>
<dbReference type="Pfam" id="PF00623">
    <property type="entry name" value="RNA_pol_Rpb1_2"/>
    <property type="match status" value="1"/>
</dbReference>
<dbReference type="Pfam" id="PF04983">
    <property type="entry name" value="RNA_pol_Rpb1_3"/>
    <property type="match status" value="1"/>
</dbReference>
<dbReference type="Pfam" id="PF05000">
    <property type="entry name" value="RNA_pol_Rpb1_4"/>
    <property type="match status" value="1"/>
</dbReference>
<dbReference type="Pfam" id="PF04998">
    <property type="entry name" value="RNA_pol_Rpb1_5"/>
    <property type="match status" value="1"/>
</dbReference>
<dbReference type="SMART" id="SM00663">
    <property type="entry name" value="RPOLA_N"/>
    <property type="match status" value="1"/>
</dbReference>
<dbReference type="SUPFAM" id="SSF64484">
    <property type="entry name" value="beta and beta-prime subunits of DNA dependent RNA-polymerase"/>
    <property type="match status" value="1"/>
</dbReference>
<feature type="chain" id="PRO_0000240820" description="DNA-directed RNA polymerase subunit beta'">
    <location>
        <begin position="1"/>
        <end position="1393"/>
    </location>
</feature>
<feature type="binding site" evidence="1">
    <location>
        <position position="70"/>
    </location>
    <ligand>
        <name>Zn(2+)</name>
        <dbReference type="ChEBI" id="CHEBI:29105"/>
        <label>1</label>
    </ligand>
</feature>
<feature type="binding site" evidence="1">
    <location>
        <position position="72"/>
    </location>
    <ligand>
        <name>Zn(2+)</name>
        <dbReference type="ChEBI" id="CHEBI:29105"/>
        <label>1</label>
    </ligand>
</feature>
<feature type="binding site" evidence="1">
    <location>
        <position position="85"/>
    </location>
    <ligand>
        <name>Zn(2+)</name>
        <dbReference type="ChEBI" id="CHEBI:29105"/>
        <label>1</label>
    </ligand>
</feature>
<feature type="binding site" evidence="1">
    <location>
        <position position="88"/>
    </location>
    <ligand>
        <name>Zn(2+)</name>
        <dbReference type="ChEBI" id="CHEBI:29105"/>
        <label>1</label>
    </ligand>
</feature>
<feature type="binding site" evidence="1">
    <location>
        <position position="461"/>
    </location>
    <ligand>
        <name>Mg(2+)</name>
        <dbReference type="ChEBI" id="CHEBI:18420"/>
    </ligand>
</feature>
<feature type="binding site" evidence="1">
    <location>
        <position position="463"/>
    </location>
    <ligand>
        <name>Mg(2+)</name>
        <dbReference type="ChEBI" id="CHEBI:18420"/>
    </ligand>
</feature>
<feature type="binding site" evidence="1">
    <location>
        <position position="465"/>
    </location>
    <ligand>
        <name>Mg(2+)</name>
        <dbReference type="ChEBI" id="CHEBI:18420"/>
    </ligand>
</feature>
<feature type="binding site" evidence="1">
    <location>
        <position position="804"/>
    </location>
    <ligand>
        <name>Zn(2+)</name>
        <dbReference type="ChEBI" id="CHEBI:29105"/>
        <label>2</label>
    </ligand>
</feature>
<feature type="binding site" evidence="1">
    <location>
        <position position="877"/>
    </location>
    <ligand>
        <name>Zn(2+)</name>
        <dbReference type="ChEBI" id="CHEBI:29105"/>
        <label>2</label>
    </ligand>
</feature>
<feature type="binding site" evidence="1">
    <location>
        <position position="884"/>
    </location>
    <ligand>
        <name>Zn(2+)</name>
        <dbReference type="ChEBI" id="CHEBI:29105"/>
        <label>2</label>
    </ligand>
</feature>
<feature type="binding site" evidence="1">
    <location>
        <position position="887"/>
    </location>
    <ligand>
        <name>Zn(2+)</name>
        <dbReference type="ChEBI" id="CHEBI:29105"/>
        <label>2</label>
    </ligand>
</feature>
<evidence type="ECO:0000255" key="1">
    <source>
        <dbReference type="HAMAP-Rule" id="MF_01322"/>
    </source>
</evidence>
<name>RPOC_RHORT</name>